<comment type="subunit">
    <text evidence="1">Part of the 50S ribosomal subunit.</text>
</comment>
<comment type="similarity">
    <text evidence="1">Belongs to the universal ribosomal protein uL30 family.</text>
</comment>
<comment type="sequence caution" evidence="2">
    <conflict type="erroneous initiation">
        <sequence resource="EMBL-CDS" id="BAE70124"/>
    </conflict>
</comment>
<sequence length="63" mass="7207">MAKDTNKTVKVRLVRGLRGTQSRHRLSVRALGLNKLNDVRELKDSPQVRGLINTVHYLVKVEE</sequence>
<feature type="chain" id="PRO_0000273893" description="Large ribosomal subunit protein uL30">
    <location>
        <begin position="1"/>
        <end position="63"/>
    </location>
</feature>
<organism>
    <name type="scientific">Xanthomonas oryzae pv. oryzae (strain MAFF 311018)</name>
    <dbReference type="NCBI Taxonomy" id="342109"/>
    <lineage>
        <taxon>Bacteria</taxon>
        <taxon>Pseudomonadati</taxon>
        <taxon>Pseudomonadota</taxon>
        <taxon>Gammaproteobacteria</taxon>
        <taxon>Lysobacterales</taxon>
        <taxon>Lysobacteraceae</taxon>
        <taxon>Xanthomonas</taxon>
    </lineage>
</organism>
<protein>
    <recommendedName>
        <fullName evidence="1">Large ribosomal subunit protein uL30</fullName>
    </recommendedName>
    <alternativeName>
        <fullName evidence="2">50S ribosomal protein L30</fullName>
    </alternativeName>
</protein>
<proteinExistence type="inferred from homology"/>
<evidence type="ECO:0000255" key="1">
    <source>
        <dbReference type="HAMAP-Rule" id="MF_01371"/>
    </source>
</evidence>
<evidence type="ECO:0000305" key="2"/>
<dbReference type="EMBL" id="AP008229">
    <property type="protein sequence ID" value="BAE70124.1"/>
    <property type="status" value="ALT_INIT"/>
    <property type="molecule type" value="Genomic_DNA"/>
</dbReference>
<dbReference type="RefSeq" id="WP_003486678.1">
    <property type="nucleotide sequence ID" value="NC_007705.1"/>
</dbReference>
<dbReference type="SMR" id="Q2P003"/>
<dbReference type="GeneID" id="97509354"/>
<dbReference type="KEGG" id="xom:XOO3369"/>
<dbReference type="HOGENOM" id="CLU_131047_1_4_6"/>
<dbReference type="GO" id="GO:0022625">
    <property type="term" value="C:cytosolic large ribosomal subunit"/>
    <property type="evidence" value="ECO:0007669"/>
    <property type="project" value="TreeGrafter"/>
</dbReference>
<dbReference type="GO" id="GO:0003735">
    <property type="term" value="F:structural constituent of ribosome"/>
    <property type="evidence" value="ECO:0007669"/>
    <property type="project" value="InterPro"/>
</dbReference>
<dbReference type="GO" id="GO:0006412">
    <property type="term" value="P:translation"/>
    <property type="evidence" value="ECO:0007669"/>
    <property type="project" value="UniProtKB-UniRule"/>
</dbReference>
<dbReference type="CDD" id="cd00355">
    <property type="entry name" value="Ribosomal_L30_like"/>
    <property type="match status" value="1"/>
</dbReference>
<dbReference type="FunFam" id="3.30.1390.20:FF:000006">
    <property type="entry name" value="50S ribosomal protein L30"/>
    <property type="match status" value="1"/>
</dbReference>
<dbReference type="Gene3D" id="3.30.1390.20">
    <property type="entry name" value="Ribosomal protein L30, ferredoxin-like fold domain"/>
    <property type="match status" value="1"/>
</dbReference>
<dbReference type="HAMAP" id="MF_01371_B">
    <property type="entry name" value="Ribosomal_uL30_B"/>
    <property type="match status" value="1"/>
</dbReference>
<dbReference type="InterPro" id="IPR036919">
    <property type="entry name" value="Ribo_uL30_ferredoxin-like_sf"/>
</dbReference>
<dbReference type="InterPro" id="IPR005996">
    <property type="entry name" value="Ribosomal_uL30_bac-type"/>
</dbReference>
<dbReference type="InterPro" id="IPR016082">
    <property type="entry name" value="Ribosomal_uL30_ferredoxin-like"/>
</dbReference>
<dbReference type="NCBIfam" id="TIGR01308">
    <property type="entry name" value="rpmD_bact"/>
    <property type="match status" value="1"/>
</dbReference>
<dbReference type="PANTHER" id="PTHR15892:SF2">
    <property type="entry name" value="LARGE RIBOSOMAL SUBUNIT PROTEIN UL30M"/>
    <property type="match status" value="1"/>
</dbReference>
<dbReference type="PANTHER" id="PTHR15892">
    <property type="entry name" value="MITOCHONDRIAL RIBOSOMAL PROTEIN L30"/>
    <property type="match status" value="1"/>
</dbReference>
<dbReference type="Pfam" id="PF00327">
    <property type="entry name" value="Ribosomal_L30"/>
    <property type="match status" value="1"/>
</dbReference>
<dbReference type="PIRSF" id="PIRSF002211">
    <property type="entry name" value="Ribosomal_L30_bac-type"/>
    <property type="match status" value="1"/>
</dbReference>
<dbReference type="SUPFAM" id="SSF55129">
    <property type="entry name" value="Ribosomal protein L30p/L7e"/>
    <property type="match status" value="1"/>
</dbReference>
<accession>Q2P003</accession>
<reference key="1">
    <citation type="journal article" date="2005" name="Jpn. Agric. Res. Q.">
        <title>Genome sequence of Xanthomonas oryzae pv. oryzae suggests contribution of large numbers of effector genes and insertion sequences to its race diversity.</title>
        <authorList>
            <person name="Ochiai H."/>
            <person name="Inoue Y."/>
            <person name="Takeya M."/>
            <person name="Sasaki A."/>
            <person name="Kaku H."/>
        </authorList>
    </citation>
    <scope>NUCLEOTIDE SEQUENCE [LARGE SCALE GENOMIC DNA]</scope>
    <source>
        <strain>MAFF 311018</strain>
    </source>
</reference>
<gene>
    <name evidence="1" type="primary">rpmD</name>
    <name type="ordered locus">XOO3369</name>
</gene>
<keyword id="KW-0687">Ribonucleoprotein</keyword>
<keyword id="KW-0689">Ribosomal protein</keyword>
<name>RL30_XANOM</name>